<proteinExistence type="evidence at transcript level"/>
<accession>Q8LGN0</accession>
<accession>O81080</accession>
<accession>Q6RKN3</accession>
<accession>Q8RY02</accession>
<name>GLR27_ARATH</name>
<organism>
    <name type="scientific">Arabidopsis thaliana</name>
    <name type="common">Mouse-ear cress</name>
    <dbReference type="NCBI Taxonomy" id="3702"/>
    <lineage>
        <taxon>Eukaryota</taxon>
        <taxon>Viridiplantae</taxon>
        <taxon>Streptophyta</taxon>
        <taxon>Embryophyta</taxon>
        <taxon>Tracheophyta</taxon>
        <taxon>Spermatophyta</taxon>
        <taxon>Magnoliopsida</taxon>
        <taxon>eudicotyledons</taxon>
        <taxon>Gunneridae</taxon>
        <taxon>Pentapetalae</taxon>
        <taxon>rosids</taxon>
        <taxon>malvids</taxon>
        <taxon>Brassicales</taxon>
        <taxon>Brassicaceae</taxon>
        <taxon>Camelineae</taxon>
        <taxon>Arabidopsis</taxon>
    </lineage>
</organism>
<sequence>MKVMNPRKTNNTFMYYFVLFVCGFVLMEGCLGQNQTTEIKVGVVLDLHTSFSKLCLTSINISLSDFYKYHSDYTTRLAIHIRDSMEDVVQASSAALDLIKNEQVSAIIGPRTSMQAEFMIRLADKSQVPTITFSATCPLLTSINSPYFVRATLDDSSQVKAIAAIVKSFGWRNVVAIYVDNEFGEGILPLLTDALQDVQAFVVNRCLIPQEANDDQILKELYKLMTMQTRVFVVHMPPTLGFRFFQKAREIGMMEEGYVWLLTDGVMNLLKSNERGSSLENMQGVLGVRSHIPKSKKLKNFRLRWEKMFPKKGNDEEMNIFALRAYDSITALAMAVEKTNIKSLRYDHPIASGNNKTNLGTLGVSRYGPSLLKALSNVRFNGLAGEFELINGQLESSVFDVINIIGSEERIIGLWRPSNGIVNAKSKNTTSVLGERLGPVIWPGKSKDVPKGWQIPTNGKMLRVGIPVKKGFLEFVDAKIDPISNAMTPTGYCIEIFEAVLKKLPYSVIPKYIAFLSPDENYDEMVYQVYTGAYDAVVGDVTIVANRSLYVDFTLPYTESGVSMMVPLKDNKNTWVFLRPWSLDLWVTTACFFVFIGFIVWILEHRVNTDFRGPPHHQIGTSFWFAFSTMNFAHREKVVSNLARFVVLVWCFVVLVLIQSYTANLTSFFTVKLLQPTVTNWKDLIKFNKNIGYQRGTFVRELLKSQGFDESQLKPFGSAVECDELFSNGTITASFDEVAYIKVILSQNSSKYTMVEPSFKTAGFGFVFPKKSPLTDDVSRAILNVTQGEEMQHIENKWFKKPNNCPDLNTSLSSNHLSLSSFWGLFLIAGIASFLALLIFVANFLYEHKHTLFDDSENSFRGKLKFLVRNFDEKDIKSHMFKENAVHNVSSPITQGSSSPLTDQSTPLPRSPEQYRELELRRVSSISSGELFTTQSEQVEDEESAIIQCEGE</sequence>
<feature type="signal peptide" evidence="2">
    <location>
        <begin position="1"/>
        <end position="32"/>
    </location>
</feature>
<feature type="chain" id="PRO_0000011602" description="Glutamate receptor 2.7">
    <location>
        <begin position="33"/>
        <end position="952"/>
    </location>
</feature>
<feature type="topological domain" description="Extracellular" evidence="2">
    <location>
        <begin position="33"/>
        <end position="582"/>
    </location>
</feature>
<feature type="transmembrane region" description="Helical" evidence="2">
    <location>
        <begin position="583"/>
        <end position="603"/>
    </location>
</feature>
<feature type="topological domain" description="Cytoplasmic" evidence="2">
    <location>
        <begin position="604"/>
        <end position="612"/>
    </location>
</feature>
<feature type="transmembrane region" description="Helical" evidence="2">
    <location>
        <begin position="613"/>
        <end position="633"/>
    </location>
</feature>
<feature type="topological domain" description="Cytoplasmic" evidence="2">
    <location>
        <begin position="634"/>
        <end position="637"/>
    </location>
</feature>
<feature type="transmembrane region" description="Helical" evidence="2">
    <location>
        <begin position="638"/>
        <end position="658"/>
    </location>
</feature>
<feature type="topological domain" description="Extracellular" evidence="2">
    <location>
        <begin position="659"/>
        <end position="821"/>
    </location>
</feature>
<feature type="transmembrane region" description="Helical" evidence="2">
    <location>
        <begin position="822"/>
        <end position="842"/>
    </location>
</feature>
<feature type="topological domain" description="Cytoplasmic" evidence="2">
    <location>
        <begin position="843"/>
        <end position="952"/>
    </location>
</feature>
<feature type="region of interest" description="Disordered" evidence="3">
    <location>
        <begin position="889"/>
        <end position="914"/>
    </location>
</feature>
<feature type="region of interest" description="Disordered" evidence="3">
    <location>
        <begin position="932"/>
        <end position="952"/>
    </location>
</feature>
<feature type="compositionally biased region" description="Polar residues" evidence="3">
    <location>
        <begin position="889"/>
        <end position="908"/>
    </location>
</feature>
<feature type="glycosylation site" description="N-linked (GlcNAc...) asparagine" evidence="2">
    <location>
        <position position="34"/>
    </location>
</feature>
<feature type="glycosylation site" description="N-linked (GlcNAc...) asparagine" evidence="2">
    <location>
        <position position="60"/>
    </location>
</feature>
<feature type="glycosylation site" description="N-linked (GlcNAc...) asparagine" evidence="2">
    <location>
        <position position="355"/>
    </location>
</feature>
<feature type="glycosylation site" description="N-linked (GlcNAc...) asparagine" evidence="2">
    <location>
        <position position="428"/>
    </location>
</feature>
<feature type="glycosylation site" description="N-linked (GlcNAc...) asparagine" evidence="2">
    <location>
        <position position="546"/>
    </location>
</feature>
<feature type="glycosylation site" description="N-linked (GlcNAc...) asparagine" evidence="2">
    <location>
        <position position="664"/>
    </location>
</feature>
<feature type="glycosylation site" description="N-linked (GlcNAc...) asparagine" evidence="2">
    <location>
        <position position="728"/>
    </location>
</feature>
<feature type="glycosylation site" description="N-linked (GlcNAc...) asparagine" evidence="2">
    <location>
        <position position="748"/>
    </location>
</feature>
<feature type="glycosylation site" description="N-linked (GlcNAc...) asparagine" evidence="2">
    <location>
        <position position="784"/>
    </location>
</feature>
<feature type="glycosylation site" description="N-linked (GlcNAc...) asparagine" evidence="2">
    <location>
        <position position="809"/>
    </location>
</feature>
<protein>
    <recommendedName>
        <fullName>Glutamate receptor 2.7</fullName>
    </recommendedName>
    <alternativeName>
        <fullName>Ligand-gated ion channel 2.7</fullName>
    </alternativeName>
</protein>
<gene>
    <name type="primary">GLR2.7</name>
    <name type="ordered locus">At2g29120</name>
    <name type="ORF">T9I4.20</name>
</gene>
<keyword id="KW-0325">Glycoprotein</keyword>
<keyword id="KW-0407">Ion channel</keyword>
<keyword id="KW-0406">Ion transport</keyword>
<keyword id="KW-1071">Ligand-gated ion channel</keyword>
<keyword id="KW-0472">Membrane</keyword>
<keyword id="KW-0675">Receptor</keyword>
<keyword id="KW-1185">Reference proteome</keyword>
<keyword id="KW-0732">Signal</keyword>
<keyword id="KW-0812">Transmembrane</keyword>
<keyword id="KW-1133">Transmembrane helix</keyword>
<keyword id="KW-0813">Transport</keyword>
<reference key="1">
    <citation type="journal article" date="2001" name="Science">
        <title>The identity of plant glutamate receptors.</title>
        <authorList>
            <person name="Lacombe B."/>
            <person name="Becker D."/>
            <person name="Hedrich R."/>
            <person name="DeSalle R."/>
            <person name="Hollmann M."/>
            <person name="Kwak J.M."/>
            <person name="Schroeder J.I."/>
            <person name="Le Novere N."/>
            <person name="Nam H.G."/>
            <person name="Spalding E.P."/>
            <person name="Tester M."/>
            <person name="Turano F.J."/>
            <person name="Chiu J."/>
            <person name="Coruzzi G."/>
        </authorList>
    </citation>
    <scope>NUCLEOTIDE SEQUENCE [MRNA]</scope>
    <scope>GENE FAMILY</scope>
    <scope>NOMENCLATURE</scope>
</reference>
<reference key="2">
    <citation type="journal article" date="1999" name="Nature">
        <title>Sequence and analysis of chromosome 2 of the plant Arabidopsis thaliana.</title>
        <authorList>
            <person name="Lin X."/>
            <person name="Kaul S."/>
            <person name="Rounsley S.D."/>
            <person name="Shea T.P."/>
            <person name="Benito M.-I."/>
            <person name="Town C.D."/>
            <person name="Fujii C.Y."/>
            <person name="Mason T.M."/>
            <person name="Bowman C.L."/>
            <person name="Barnstead M.E."/>
            <person name="Feldblyum T.V."/>
            <person name="Buell C.R."/>
            <person name="Ketchum K.A."/>
            <person name="Lee J.J."/>
            <person name="Ronning C.M."/>
            <person name="Koo H.L."/>
            <person name="Moffat K.S."/>
            <person name="Cronin L.A."/>
            <person name="Shen M."/>
            <person name="Pai G."/>
            <person name="Van Aken S."/>
            <person name="Umayam L."/>
            <person name="Tallon L.J."/>
            <person name="Gill J.E."/>
            <person name="Adams M.D."/>
            <person name="Carrera A.J."/>
            <person name="Creasy T.H."/>
            <person name="Goodman H.M."/>
            <person name="Somerville C.R."/>
            <person name="Copenhaver G.P."/>
            <person name="Preuss D."/>
            <person name="Nierman W.C."/>
            <person name="White O."/>
            <person name="Eisen J.A."/>
            <person name="Salzberg S.L."/>
            <person name="Fraser C.M."/>
            <person name="Venter J.C."/>
        </authorList>
    </citation>
    <scope>NUCLEOTIDE SEQUENCE [LARGE SCALE GENOMIC DNA]</scope>
    <source>
        <strain>cv. Columbia</strain>
    </source>
</reference>
<reference key="3">
    <citation type="journal article" date="2017" name="Plant J.">
        <title>Araport11: a complete reannotation of the Arabidopsis thaliana reference genome.</title>
        <authorList>
            <person name="Cheng C.Y."/>
            <person name="Krishnakumar V."/>
            <person name="Chan A.P."/>
            <person name="Thibaud-Nissen F."/>
            <person name="Schobel S."/>
            <person name="Town C.D."/>
        </authorList>
    </citation>
    <scope>GENOME REANNOTATION</scope>
    <source>
        <strain>cv. Columbia</strain>
    </source>
</reference>
<reference key="4">
    <citation type="journal article" date="2002" name="Mol. Biol. Evol.">
        <title>Phylogenetic and expression analysis of the glutamate-receptor-like gene family in Arabidopsis thaliana.</title>
        <authorList>
            <person name="Chiu J.C."/>
            <person name="Brenner E.D."/>
            <person name="DeSalle R."/>
            <person name="Nitabach M.N."/>
            <person name="Holmes T.C."/>
            <person name="Coruzzi G.M."/>
        </authorList>
    </citation>
    <scope>NUCLEOTIDE SEQUENCE [MRNA] OF 27-952</scope>
    <scope>TISSUE SPECIFICITY</scope>
    <source>
        <strain>cv. Columbia</strain>
    </source>
</reference>
<reference key="5">
    <citation type="journal article" date="2003" name="Science">
        <title>Empirical analysis of transcriptional activity in the Arabidopsis genome.</title>
        <authorList>
            <person name="Yamada K."/>
            <person name="Lim J."/>
            <person name="Dale J.M."/>
            <person name="Chen H."/>
            <person name="Shinn P."/>
            <person name="Palm C.J."/>
            <person name="Southwick A.M."/>
            <person name="Wu H.C."/>
            <person name="Kim C.J."/>
            <person name="Nguyen M."/>
            <person name="Pham P.K."/>
            <person name="Cheuk R.F."/>
            <person name="Karlin-Newmann G."/>
            <person name="Liu S.X."/>
            <person name="Lam B."/>
            <person name="Sakano H."/>
            <person name="Wu T."/>
            <person name="Yu G."/>
            <person name="Miranda M."/>
            <person name="Quach H.L."/>
            <person name="Tripp M."/>
            <person name="Chang C.H."/>
            <person name="Lee J.M."/>
            <person name="Toriumi M.J."/>
            <person name="Chan M.M."/>
            <person name="Tang C.C."/>
            <person name="Onodera C.S."/>
            <person name="Deng J.M."/>
            <person name="Akiyama K."/>
            <person name="Ansari Y."/>
            <person name="Arakawa T."/>
            <person name="Banh J."/>
            <person name="Banno F."/>
            <person name="Bowser L."/>
            <person name="Brooks S.Y."/>
            <person name="Carninci P."/>
            <person name="Chao Q."/>
            <person name="Choy N."/>
            <person name="Enju A."/>
            <person name="Goldsmith A.D."/>
            <person name="Gurjal M."/>
            <person name="Hansen N.F."/>
            <person name="Hayashizaki Y."/>
            <person name="Johnson-Hopson C."/>
            <person name="Hsuan V.W."/>
            <person name="Iida K."/>
            <person name="Karnes M."/>
            <person name="Khan S."/>
            <person name="Koesema E."/>
            <person name="Ishida J."/>
            <person name="Jiang P.X."/>
            <person name="Jones T."/>
            <person name="Kawai J."/>
            <person name="Kamiya A."/>
            <person name="Meyers C."/>
            <person name="Nakajima M."/>
            <person name="Narusaka M."/>
            <person name="Seki M."/>
            <person name="Sakurai T."/>
            <person name="Satou M."/>
            <person name="Tamse R."/>
            <person name="Vaysberg M."/>
            <person name="Wallender E.K."/>
            <person name="Wong C."/>
            <person name="Yamamura Y."/>
            <person name="Yuan S."/>
            <person name="Shinozaki K."/>
            <person name="Davis R.W."/>
            <person name="Theologis A."/>
            <person name="Ecker J.R."/>
        </authorList>
    </citation>
    <scope>NUCLEOTIDE SEQUENCE [LARGE SCALE MRNA] OF 560-952</scope>
    <source>
        <strain>cv. Columbia</strain>
    </source>
</reference>
<dbReference type="EMBL" id="AY495450">
    <property type="protein sequence ID" value="AAR88101.1"/>
    <property type="molecule type" value="mRNA"/>
</dbReference>
<dbReference type="EMBL" id="AC005315">
    <property type="protein sequence ID" value="AAC33239.1"/>
    <property type="status" value="ALT_SEQ"/>
    <property type="molecule type" value="Genomic_DNA"/>
</dbReference>
<dbReference type="EMBL" id="CP002685">
    <property type="protein sequence ID" value="AEC08213.1"/>
    <property type="molecule type" value="Genomic_DNA"/>
</dbReference>
<dbReference type="EMBL" id="AY072069">
    <property type="protein sequence ID" value="AAL61998.1"/>
    <property type="molecule type" value="mRNA"/>
</dbReference>
<dbReference type="EMBL" id="AY080587">
    <property type="protein sequence ID" value="AAL85964.2"/>
    <property type="molecule type" value="mRNA"/>
</dbReference>
<dbReference type="PIR" id="T02742">
    <property type="entry name" value="T02742"/>
</dbReference>
<dbReference type="RefSeq" id="NP_180476.3">
    <property type="nucleotide sequence ID" value="NM_128469.4"/>
</dbReference>
<dbReference type="SMR" id="Q8LGN0"/>
<dbReference type="BioGRID" id="2810">
    <property type="interactions" value="9"/>
</dbReference>
<dbReference type="FunCoup" id="Q8LGN0">
    <property type="interactions" value="199"/>
</dbReference>
<dbReference type="STRING" id="3702.Q8LGN0"/>
<dbReference type="GlyCosmos" id="Q8LGN0">
    <property type="glycosylation" value="10 sites, No reported glycans"/>
</dbReference>
<dbReference type="GlyGen" id="Q8LGN0">
    <property type="glycosylation" value="10 sites"/>
</dbReference>
<dbReference type="iPTMnet" id="Q8LGN0"/>
<dbReference type="PaxDb" id="3702-AT2G29120.1"/>
<dbReference type="ProteomicsDB" id="247363"/>
<dbReference type="EnsemblPlants" id="AT2G29120.1">
    <property type="protein sequence ID" value="AT2G29120.1"/>
    <property type="gene ID" value="AT2G29120"/>
</dbReference>
<dbReference type="GeneID" id="817460"/>
<dbReference type="Gramene" id="AT2G29120.1">
    <property type="protein sequence ID" value="AT2G29120.1"/>
    <property type="gene ID" value="AT2G29120"/>
</dbReference>
<dbReference type="KEGG" id="ath:AT2G29120"/>
<dbReference type="Araport" id="AT2G29120"/>
<dbReference type="TAIR" id="AT2G29120">
    <property type="gene designation" value="GLR2.7"/>
</dbReference>
<dbReference type="eggNOG" id="KOG1052">
    <property type="taxonomic scope" value="Eukaryota"/>
</dbReference>
<dbReference type="HOGENOM" id="CLU_007358_0_2_1"/>
<dbReference type="InParanoid" id="Q8LGN0"/>
<dbReference type="OMA" id="RTMFRIF"/>
<dbReference type="PhylomeDB" id="Q8LGN0"/>
<dbReference type="PRO" id="PR:Q8LGN0"/>
<dbReference type="Proteomes" id="UP000006548">
    <property type="component" value="Chromosome 2"/>
</dbReference>
<dbReference type="ExpressionAtlas" id="Q8LGN0">
    <property type="expression patterns" value="baseline and differential"/>
</dbReference>
<dbReference type="GO" id="GO:0000325">
    <property type="term" value="C:plant-type vacuole"/>
    <property type="evidence" value="ECO:0007005"/>
    <property type="project" value="TAIR"/>
</dbReference>
<dbReference type="GO" id="GO:0005886">
    <property type="term" value="C:plasma membrane"/>
    <property type="evidence" value="ECO:0000250"/>
    <property type="project" value="UniProtKB"/>
</dbReference>
<dbReference type="GO" id="GO:0005262">
    <property type="term" value="F:calcium channel activity"/>
    <property type="evidence" value="ECO:0000250"/>
    <property type="project" value="UniProtKB"/>
</dbReference>
<dbReference type="GO" id="GO:0008066">
    <property type="term" value="F:glutamate receptor activity"/>
    <property type="evidence" value="ECO:0000250"/>
    <property type="project" value="UniProtKB"/>
</dbReference>
<dbReference type="GO" id="GO:0015276">
    <property type="term" value="F:ligand-gated monoatomic ion channel activity"/>
    <property type="evidence" value="ECO:0007669"/>
    <property type="project" value="InterPro"/>
</dbReference>
<dbReference type="GO" id="GO:0006816">
    <property type="term" value="P:calcium ion transport"/>
    <property type="evidence" value="ECO:0000250"/>
    <property type="project" value="UniProtKB"/>
</dbReference>
<dbReference type="GO" id="GO:0019722">
    <property type="term" value="P:calcium-mediated signaling"/>
    <property type="evidence" value="ECO:0000250"/>
    <property type="project" value="UniProtKB"/>
</dbReference>
<dbReference type="GO" id="GO:0071230">
    <property type="term" value="P:cellular response to amino acid stimulus"/>
    <property type="evidence" value="ECO:0000250"/>
    <property type="project" value="UniProtKB"/>
</dbReference>
<dbReference type="CDD" id="cd13686">
    <property type="entry name" value="GluR_Plant"/>
    <property type="match status" value="1"/>
</dbReference>
<dbReference type="CDD" id="cd19990">
    <property type="entry name" value="PBP1_GABAb_receptor_plant"/>
    <property type="match status" value="1"/>
</dbReference>
<dbReference type="FunFam" id="1.10.287.70:FF:000037">
    <property type="entry name" value="Glutamate receptor"/>
    <property type="match status" value="1"/>
</dbReference>
<dbReference type="FunFam" id="3.40.190.10:FF:000103">
    <property type="entry name" value="Glutamate receptor"/>
    <property type="match status" value="1"/>
</dbReference>
<dbReference type="FunFam" id="3.40.50.2300:FF:000081">
    <property type="entry name" value="Glutamate receptor"/>
    <property type="match status" value="1"/>
</dbReference>
<dbReference type="FunFam" id="3.40.50.2300:FF:000310">
    <property type="entry name" value="Glutamate receptor"/>
    <property type="match status" value="1"/>
</dbReference>
<dbReference type="FunFam" id="3.40.190.10:FF:000195">
    <property type="entry name" value="Glutamate receptor 2.7"/>
    <property type="match status" value="1"/>
</dbReference>
<dbReference type="Gene3D" id="1.10.287.70">
    <property type="match status" value="1"/>
</dbReference>
<dbReference type="Gene3D" id="3.40.50.2300">
    <property type="match status" value="2"/>
</dbReference>
<dbReference type="Gene3D" id="3.40.190.10">
    <property type="entry name" value="Periplasmic binding protein-like II"/>
    <property type="match status" value="2"/>
</dbReference>
<dbReference type="InterPro" id="IPR001828">
    <property type="entry name" value="ANF_lig-bd_rcpt"/>
</dbReference>
<dbReference type="InterPro" id="IPR044440">
    <property type="entry name" value="GABAb_receptor_plant_PBP1"/>
</dbReference>
<dbReference type="InterPro" id="IPR015683">
    <property type="entry name" value="Ionotropic_Glu_rcpt"/>
</dbReference>
<dbReference type="InterPro" id="IPR001320">
    <property type="entry name" value="Iontro_rcpt_C"/>
</dbReference>
<dbReference type="InterPro" id="IPR017103">
    <property type="entry name" value="Iontropic_Glu_rcpt_pln"/>
</dbReference>
<dbReference type="InterPro" id="IPR028082">
    <property type="entry name" value="Peripla_BP_I"/>
</dbReference>
<dbReference type="InterPro" id="IPR001638">
    <property type="entry name" value="Solute-binding_3/MltF_N"/>
</dbReference>
<dbReference type="PANTHER" id="PTHR34836">
    <property type="entry name" value="OS06G0188250 PROTEIN"/>
    <property type="match status" value="1"/>
</dbReference>
<dbReference type="PANTHER" id="PTHR34836:SF1">
    <property type="entry name" value="OS09G0428600 PROTEIN"/>
    <property type="match status" value="1"/>
</dbReference>
<dbReference type="Pfam" id="PF01094">
    <property type="entry name" value="ANF_receptor"/>
    <property type="match status" value="1"/>
</dbReference>
<dbReference type="Pfam" id="PF00060">
    <property type="entry name" value="Lig_chan"/>
    <property type="match status" value="1"/>
</dbReference>
<dbReference type="Pfam" id="PF00497">
    <property type="entry name" value="SBP_bac_3"/>
    <property type="match status" value="1"/>
</dbReference>
<dbReference type="PIRSF" id="PIRSF037090">
    <property type="entry name" value="Iontro_Glu-like_rcpt_pln"/>
    <property type="match status" value="1"/>
</dbReference>
<dbReference type="SMART" id="SM00079">
    <property type="entry name" value="PBPe"/>
    <property type="match status" value="1"/>
</dbReference>
<dbReference type="SUPFAM" id="SSF53822">
    <property type="entry name" value="Periplasmic binding protein-like I"/>
    <property type="match status" value="1"/>
</dbReference>
<dbReference type="SUPFAM" id="SSF53850">
    <property type="entry name" value="Periplasmic binding protein-like II"/>
    <property type="match status" value="1"/>
</dbReference>
<dbReference type="SUPFAM" id="SSF81324">
    <property type="entry name" value="Voltage-gated potassium channels"/>
    <property type="match status" value="1"/>
</dbReference>
<evidence type="ECO:0000250" key="1"/>
<evidence type="ECO:0000255" key="2"/>
<evidence type="ECO:0000256" key="3">
    <source>
        <dbReference type="SAM" id="MobiDB-lite"/>
    </source>
</evidence>
<evidence type="ECO:0000269" key="4">
    <source>
    </source>
</evidence>
<evidence type="ECO:0000305" key="5"/>
<comment type="function">
    <text>Glutamate-gated receptor that probably acts as a non-selective cation channel. May be involved in light-signal transduction and calcium homeostasis via the regulation of calcium influx into cells.</text>
</comment>
<comment type="subunit">
    <text evidence="1">May form heteromers.</text>
</comment>
<comment type="subcellular location">
    <subcellularLocation>
        <location>Membrane</location>
        <topology>Multi-pass membrane protein</topology>
    </subcellularLocation>
</comment>
<comment type="tissue specificity">
    <text evidence="4">Expressed predominantly in leaves.</text>
</comment>
<comment type="similarity">
    <text evidence="5">Belongs to the glutamate-gated ion channel (TC 1.A.10.1) family.</text>
</comment>
<comment type="sequence caution" evidence="5">
    <conflict type="erroneous gene model prediction">
        <sequence resource="EMBL-CDS" id="AAC33239"/>
    </conflict>
</comment>